<evidence type="ECO:0000269" key="1">
    <source>
    </source>
</evidence>
<evidence type="ECO:0000269" key="2">
    <source ref="3"/>
</evidence>
<evidence type="ECO:0000305" key="3"/>
<protein>
    <recommendedName>
        <fullName>Grammistin Gs G</fullName>
    </recommendedName>
    <alternativeName>
        <fullName>Gs 2</fullName>
    </alternativeName>
</protein>
<reference key="1">
    <citation type="journal article" date="2000" name="Toxicon">
        <title>Isolation and structures of grammistins, peptide toxins from the skin secretion of the soapfish Grammistes sexlineatus.</title>
        <authorList>
            <person name="Shiomi K."/>
            <person name="Igarashi T."/>
            <person name="Yokota H."/>
            <person name="Nagashima Y."/>
            <person name="Ishida M."/>
        </authorList>
    </citation>
    <scope>PROTEIN SEQUENCE</scope>
    <scope>MASS SPECTROMETRY</scope>
    <scope>TOXIC DOSE</scope>
    <source>
        <tissue>Skin secretion</tissue>
    </source>
</reference>
<reference key="2">
    <citation type="journal article" date="2005" name="Toxicon">
        <title>Further isolation and characterization of grammistins from the skin secretion of the soapfish Grammistes sexlineatus.</title>
        <authorList>
            <person name="Sugiyama N."/>
            <person name="Araki M."/>
            <person name="Ishida M."/>
            <person name="Nagashima Y."/>
            <person name="Shiomi K."/>
        </authorList>
    </citation>
    <scope>PROTEIN SEQUENCE</scope>
    <source>
        <tissue>Skin secretion</tissue>
    </source>
</reference>
<reference key="3">
    <citation type="journal article" date="2001" name="Fish. Sci.">
        <title>Interaction of grammistins with lipids and their antibacterial activity.</title>
        <authorList>
            <person name="Yokota H."/>
            <person name="Nagashima Y."/>
            <person name="Shiomi K."/>
        </authorList>
    </citation>
    <scope>FUNCTION</scope>
</reference>
<keyword id="KW-0044">Antibiotic</keyword>
<keyword id="KW-0929">Antimicrobial</keyword>
<keyword id="KW-0204">Cytolysis</keyword>
<keyword id="KW-0903">Direct protein sequencing</keyword>
<keyword id="KW-0354">Hemolysis</keyword>
<keyword id="KW-0964">Secreted</keyword>
<keyword id="KW-0800">Toxin</keyword>
<name>GRAG_GRASX</name>
<proteinExistence type="evidence at protein level"/>
<accession>P69836</accession>
<sequence>LFGFLIPLLPHIIGAIPQVIGAIR</sequence>
<dbReference type="GO" id="GO:0005576">
    <property type="term" value="C:extracellular region"/>
    <property type="evidence" value="ECO:0007669"/>
    <property type="project" value="UniProtKB-SubCell"/>
</dbReference>
<dbReference type="GO" id="GO:0090729">
    <property type="term" value="F:toxin activity"/>
    <property type="evidence" value="ECO:0007669"/>
    <property type="project" value="UniProtKB-KW"/>
</dbReference>
<dbReference type="GO" id="GO:0042742">
    <property type="term" value="P:defense response to bacterium"/>
    <property type="evidence" value="ECO:0007669"/>
    <property type="project" value="UniProtKB-KW"/>
</dbReference>
<dbReference type="GO" id="GO:0031640">
    <property type="term" value="P:killing of cells of another organism"/>
    <property type="evidence" value="ECO:0007669"/>
    <property type="project" value="UniProtKB-KW"/>
</dbReference>
<feature type="peptide" id="PRO_0000044519" description="Grammistin Gs G">
    <location>
        <begin position="1"/>
        <end position="24"/>
    </location>
</feature>
<comment type="function">
    <text evidence="2">Thanks to its abundant amphiphilic alpha-helices, it may integrate into membrane phospholipids, leading to lysis of the membrane. Its high hemolytic activity is inhibited by phospholipids, but not by cholesterol. Has antibacterial activity with a broad spectrum against various species of bacteria including both Gram-positive and Gram-negative groups. Also has high ichthyotoxic activity.</text>
</comment>
<comment type="subunit">
    <text evidence="3">Exists as aggregates of 3-4 molecules.</text>
</comment>
<comment type="subcellular location">
    <subcellularLocation>
        <location>Secreted</location>
    </subcellularLocation>
</comment>
<comment type="tissue specificity">
    <text>Expressed by the skin glands.</text>
</comment>
<comment type="mass spectrometry"/>
<comment type="toxic dose">
    <text>LD(50) is 0.19 ug/ml against killifish.</text>
</comment>
<comment type="similarity">
    <text evidence="3">Belongs to the grammistin family. Group 1 subfamily.</text>
</comment>
<organism>
    <name type="scientific">Grammistes sexlineatus</name>
    <name type="common">Goldenstriped soapfish</name>
    <name type="synonym">Perca sexlineata</name>
    <dbReference type="NCBI Taxonomy" id="270576"/>
    <lineage>
        <taxon>Eukaryota</taxon>
        <taxon>Metazoa</taxon>
        <taxon>Chordata</taxon>
        <taxon>Craniata</taxon>
        <taxon>Vertebrata</taxon>
        <taxon>Euteleostomi</taxon>
        <taxon>Actinopterygii</taxon>
        <taxon>Neopterygii</taxon>
        <taxon>Teleostei</taxon>
        <taxon>Neoteleostei</taxon>
        <taxon>Acanthomorphata</taxon>
        <taxon>Eupercaria</taxon>
        <taxon>Perciformes</taxon>
        <taxon>Serranoidei</taxon>
        <taxon>Serranidae</taxon>
        <taxon>Epinephelinae</taxon>
        <taxon>Grammistini</taxon>
        <taxon>Grammistes</taxon>
    </lineage>
</organism>